<evidence type="ECO:0000255" key="1"/>
<evidence type="ECO:0000256" key="2">
    <source>
        <dbReference type="SAM" id="MobiDB-lite"/>
    </source>
</evidence>
<evidence type="ECO:0000305" key="3"/>
<evidence type="ECO:0000312" key="4">
    <source>
        <dbReference type="MGI" id="MGI:1915179"/>
    </source>
</evidence>
<keyword id="KW-0175">Coiled coil</keyword>
<keyword id="KW-1185">Reference proteome</keyword>
<accession>Q9D9B0</accession>
<accession>Q9D9H6</accession>
<proteinExistence type="evidence at transcript level"/>
<gene>
    <name evidence="4" type="primary">Ccdc70</name>
</gene>
<sequence>MFPFKVSKWMGLACLRSLVLPSPSIRQKKLIHKLQEEKAFREEMKIFHEKIEDFREEIWEFRGKIRAFRGQILGFWEEERPFWEEEKIFWKEEKTFWEMEKSFREEEKTFWKKYRTFWKEDKAFWREDNALWERDRNLLQEDKALWEEEKALWVEERALLAEEKALWEDKKSLWEEENALWEEEKALWVEGGGFHLLGEQRHQNGPYNANEEPQSTSFPRGRA</sequence>
<dbReference type="EMBL" id="AK006920">
    <property type="protein sequence ID" value="BAB24790.1"/>
    <property type="molecule type" value="mRNA"/>
</dbReference>
<dbReference type="EMBL" id="AK007190">
    <property type="protein sequence ID" value="BAB24892.1"/>
    <property type="molecule type" value="mRNA"/>
</dbReference>
<dbReference type="EMBL" id="BC049553">
    <property type="protein sequence ID" value="AAH49553.1"/>
    <property type="molecule type" value="mRNA"/>
</dbReference>
<dbReference type="CCDS" id="CCDS22167.1"/>
<dbReference type="RefSeq" id="NP_001344153.1">
    <property type="nucleotide sequence ID" value="NM_001357224.1"/>
</dbReference>
<dbReference type="RefSeq" id="NP_080735.1">
    <property type="nucleotide sequence ID" value="NM_026459.4"/>
</dbReference>
<dbReference type="RefSeq" id="XP_006509245.1">
    <property type="nucleotide sequence ID" value="XM_006509182.1"/>
</dbReference>
<dbReference type="RefSeq" id="XP_006509246.1">
    <property type="nucleotide sequence ID" value="XM_006509183.1"/>
</dbReference>
<dbReference type="SMR" id="Q9D9B0"/>
<dbReference type="FunCoup" id="Q9D9B0">
    <property type="interactions" value="12"/>
</dbReference>
<dbReference type="STRING" id="10090.ENSMUSP00000017193"/>
<dbReference type="PhosphoSitePlus" id="Q9D9B0"/>
<dbReference type="jPOST" id="Q9D9B0"/>
<dbReference type="PaxDb" id="10090-ENSMUSP00000017193"/>
<dbReference type="ProteomicsDB" id="265596"/>
<dbReference type="Antibodypedia" id="42328">
    <property type="antibodies" value="67 antibodies from 18 providers"/>
</dbReference>
<dbReference type="Ensembl" id="ENSMUST00000017193.2">
    <property type="protein sequence ID" value="ENSMUSP00000017193.2"/>
    <property type="gene ID" value="ENSMUSG00000017049.5"/>
</dbReference>
<dbReference type="Ensembl" id="ENSMUST00000070649.2">
    <property type="protein sequence ID" value="ENSMUSP00000069249.2"/>
    <property type="gene ID" value="ENSMUSG00000017049.5"/>
</dbReference>
<dbReference type="GeneID" id="67929"/>
<dbReference type="KEGG" id="mmu:67929"/>
<dbReference type="UCSC" id="uc009lci.1">
    <property type="organism name" value="mouse"/>
</dbReference>
<dbReference type="AGR" id="MGI:1915179"/>
<dbReference type="CTD" id="83446"/>
<dbReference type="MGI" id="MGI:1915179">
    <property type="gene designation" value="Ccdc70"/>
</dbReference>
<dbReference type="VEuPathDB" id="HostDB:ENSMUSG00000017049"/>
<dbReference type="eggNOG" id="ENOG502S3RY">
    <property type="taxonomic scope" value="Eukaryota"/>
</dbReference>
<dbReference type="GeneTree" id="ENSGT00940000153137"/>
<dbReference type="HOGENOM" id="CLU_1293990_0_0_1"/>
<dbReference type="InParanoid" id="Q9D9B0"/>
<dbReference type="OMA" id="FREEMWN"/>
<dbReference type="OrthoDB" id="76453at2759"/>
<dbReference type="PhylomeDB" id="Q9D9B0"/>
<dbReference type="TreeFam" id="TF336984"/>
<dbReference type="BioGRID-ORCS" id="67929">
    <property type="hits" value="2 hits in 76 CRISPR screens"/>
</dbReference>
<dbReference type="PRO" id="PR:Q9D9B0"/>
<dbReference type="Proteomes" id="UP000000589">
    <property type="component" value="Chromosome 8"/>
</dbReference>
<dbReference type="RNAct" id="Q9D9B0">
    <property type="molecule type" value="protein"/>
</dbReference>
<dbReference type="Bgee" id="ENSMUSG00000017049">
    <property type="expression patterns" value="Expressed in seminiferous tubule of testis and 17 other cell types or tissues"/>
</dbReference>
<dbReference type="GO" id="GO:0005886">
    <property type="term" value="C:plasma membrane"/>
    <property type="evidence" value="ECO:0007669"/>
    <property type="project" value="Ensembl"/>
</dbReference>
<feature type="chain" id="PRO_0000234434" description="Coiled-coil domain-containing protein 70">
    <location>
        <begin position="1"/>
        <end position="223"/>
    </location>
</feature>
<feature type="region of interest" description="Disordered" evidence="2">
    <location>
        <begin position="199"/>
        <end position="223"/>
    </location>
</feature>
<feature type="coiled-coil region" evidence="1">
    <location>
        <begin position="129"/>
        <end position="153"/>
    </location>
</feature>
<feature type="compositionally biased region" description="Polar residues" evidence="2">
    <location>
        <begin position="203"/>
        <end position="223"/>
    </location>
</feature>
<feature type="sequence conflict" description="In Ref. 1; BAB24790." evidence="3" ref="1">
    <original>GLA</original>
    <variation>DLP</variation>
    <location>
        <begin position="11"/>
        <end position="13"/>
    </location>
</feature>
<feature type="sequence conflict" description="In Ref. 1; BAB24790." evidence="3" ref="1">
    <original>EE</original>
    <variation>GG</variation>
    <location>
        <begin position="36"/>
        <end position="37"/>
    </location>
</feature>
<feature type="sequence conflict" description="In Ref. 1; BAB24790." evidence="3" ref="1">
    <original>A</original>
    <variation>G</variation>
    <location>
        <position position="67"/>
    </location>
</feature>
<reference key="1">
    <citation type="journal article" date="2005" name="Science">
        <title>The transcriptional landscape of the mammalian genome.</title>
        <authorList>
            <person name="Carninci P."/>
            <person name="Kasukawa T."/>
            <person name="Katayama S."/>
            <person name="Gough J."/>
            <person name="Frith M.C."/>
            <person name="Maeda N."/>
            <person name="Oyama R."/>
            <person name="Ravasi T."/>
            <person name="Lenhard B."/>
            <person name="Wells C."/>
            <person name="Kodzius R."/>
            <person name="Shimokawa K."/>
            <person name="Bajic V.B."/>
            <person name="Brenner S.E."/>
            <person name="Batalov S."/>
            <person name="Forrest A.R."/>
            <person name="Zavolan M."/>
            <person name="Davis M.J."/>
            <person name="Wilming L.G."/>
            <person name="Aidinis V."/>
            <person name="Allen J.E."/>
            <person name="Ambesi-Impiombato A."/>
            <person name="Apweiler R."/>
            <person name="Aturaliya R.N."/>
            <person name="Bailey T.L."/>
            <person name="Bansal M."/>
            <person name="Baxter L."/>
            <person name="Beisel K.W."/>
            <person name="Bersano T."/>
            <person name="Bono H."/>
            <person name="Chalk A.M."/>
            <person name="Chiu K.P."/>
            <person name="Choudhary V."/>
            <person name="Christoffels A."/>
            <person name="Clutterbuck D.R."/>
            <person name="Crowe M.L."/>
            <person name="Dalla E."/>
            <person name="Dalrymple B.P."/>
            <person name="de Bono B."/>
            <person name="Della Gatta G."/>
            <person name="di Bernardo D."/>
            <person name="Down T."/>
            <person name="Engstrom P."/>
            <person name="Fagiolini M."/>
            <person name="Faulkner G."/>
            <person name="Fletcher C.F."/>
            <person name="Fukushima T."/>
            <person name="Furuno M."/>
            <person name="Futaki S."/>
            <person name="Gariboldi M."/>
            <person name="Georgii-Hemming P."/>
            <person name="Gingeras T.R."/>
            <person name="Gojobori T."/>
            <person name="Green R.E."/>
            <person name="Gustincich S."/>
            <person name="Harbers M."/>
            <person name="Hayashi Y."/>
            <person name="Hensch T.K."/>
            <person name="Hirokawa N."/>
            <person name="Hill D."/>
            <person name="Huminiecki L."/>
            <person name="Iacono M."/>
            <person name="Ikeo K."/>
            <person name="Iwama A."/>
            <person name="Ishikawa T."/>
            <person name="Jakt M."/>
            <person name="Kanapin A."/>
            <person name="Katoh M."/>
            <person name="Kawasawa Y."/>
            <person name="Kelso J."/>
            <person name="Kitamura H."/>
            <person name="Kitano H."/>
            <person name="Kollias G."/>
            <person name="Krishnan S.P."/>
            <person name="Kruger A."/>
            <person name="Kummerfeld S.K."/>
            <person name="Kurochkin I.V."/>
            <person name="Lareau L.F."/>
            <person name="Lazarevic D."/>
            <person name="Lipovich L."/>
            <person name="Liu J."/>
            <person name="Liuni S."/>
            <person name="McWilliam S."/>
            <person name="Madan Babu M."/>
            <person name="Madera M."/>
            <person name="Marchionni L."/>
            <person name="Matsuda H."/>
            <person name="Matsuzawa S."/>
            <person name="Miki H."/>
            <person name="Mignone F."/>
            <person name="Miyake S."/>
            <person name="Morris K."/>
            <person name="Mottagui-Tabar S."/>
            <person name="Mulder N."/>
            <person name="Nakano N."/>
            <person name="Nakauchi H."/>
            <person name="Ng P."/>
            <person name="Nilsson R."/>
            <person name="Nishiguchi S."/>
            <person name="Nishikawa S."/>
            <person name="Nori F."/>
            <person name="Ohara O."/>
            <person name="Okazaki Y."/>
            <person name="Orlando V."/>
            <person name="Pang K.C."/>
            <person name="Pavan W.J."/>
            <person name="Pavesi G."/>
            <person name="Pesole G."/>
            <person name="Petrovsky N."/>
            <person name="Piazza S."/>
            <person name="Reed J."/>
            <person name="Reid J.F."/>
            <person name="Ring B.Z."/>
            <person name="Ringwald M."/>
            <person name="Rost B."/>
            <person name="Ruan Y."/>
            <person name="Salzberg S.L."/>
            <person name="Sandelin A."/>
            <person name="Schneider C."/>
            <person name="Schoenbach C."/>
            <person name="Sekiguchi K."/>
            <person name="Semple C.A."/>
            <person name="Seno S."/>
            <person name="Sessa L."/>
            <person name="Sheng Y."/>
            <person name="Shibata Y."/>
            <person name="Shimada H."/>
            <person name="Shimada K."/>
            <person name="Silva D."/>
            <person name="Sinclair B."/>
            <person name="Sperling S."/>
            <person name="Stupka E."/>
            <person name="Sugiura K."/>
            <person name="Sultana R."/>
            <person name="Takenaka Y."/>
            <person name="Taki K."/>
            <person name="Tammoja K."/>
            <person name="Tan S.L."/>
            <person name="Tang S."/>
            <person name="Taylor M.S."/>
            <person name="Tegner J."/>
            <person name="Teichmann S.A."/>
            <person name="Ueda H.R."/>
            <person name="van Nimwegen E."/>
            <person name="Verardo R."/>
            <person name="Wei C.L."/>
            <person name="Yagi K."/>
            <person name="Yamanishi H."/>
            <person name="Zabarovsky E."/>
            <person name="Zhu S."/>
            <person name="Zimmer A."/>
            <person name="Hide W."/>
            <person name="Bult C."/>
            <person name="Grimmond S.M."/>
            <person name="Teasdale R.D."/>
            <person name="Liu E.T."/>
            <person name="Brusic V."/>
            <person name="Quackenbush J."/>
            <person name="Wahlestedt C."/>
            <person name="Mattick J.S."/>
            <person name="Hume D.A."/>
            <person name="Kai C."/>
            <person name="Sasaki D."/>
            <person name="Tomaru Y."/>
            <person name="Fukuda S."/>
            <person name="Kanamori-Katayama M."/>
            <person name="Suzuki M."/>
            <person name="Aoki J."/>
            <person name="Arakawa T."/>
            <person name="Iida J."/>
            <person name="Imamura K."/>
            <person name="Itoh M."/>
            <person name="Kato T."/>
            <person name="Kawaji H."/>
            <person name="Kawagashira N."/>
            <person name="Kawashima T."/>
            <person name="Kojima M."/>
            <person name="Kondo S."/>
            <person name="Konno H."/>
            <person name="Nakano K."/>
            <person name="Ninomiya N."/>
            <person name="Nishio T."/>
            <person name="Okada M."/>
            <person name="Plessy C."/>
            <person name="Shibata K."/>
            <person name="Shiraki T."/>
            <person name="Suzuki S."/>
            <person name="Tagami M."/>
            <person name="Waki K."/>
            <person name="Watahiki A."/>
            <person name="Okamura-Oho Y."/>
            <person name="Suzuki H."/>
            <person name="Kawai J."/>
            <person name="Hayashizaki Y."/>
        </authorList>
    </citation>
    <scope>NUCLEOTIDE SEQUENCE [LARGE SCALE MRNA]</scope>
    <source>
        <strain>C57BL/6J</strain>
        <tissue>Testis</tissue>
    </source>
</reference>
<reference key="2">
    <citation type="journal article" date="2004" name="Genome Res.">
        <title>The status, quality, and expansion of the NIH full-length cDNA project: the Mammalian Gene Collection (MGC).</title>
        <authorList>
            <consortium name="The MGC Project Team"/>
        </authorList>
    </citation>
    <scope>NUCLEOTIDE SEQUENCE [LARGE SCALE MRNA]</scope>
    <source>
        <tissue>Testis</tissue>
    </source>
</reference>
<protein>
    <recommendedName>
        <fullName>Coiled-coil domain-containing protein 70</fullName>
    </recommendedName>
</protein>
<organism>
    <name type="scientific">Mus musculus</name>
    <name type="common">Mouse</name>
    <dbReference type="NCBI Taxonomy" id="10090"/>
    <lineage>
        <taxon>Eukaryota</taxon>
        <taxon>Metazoa</taxon>
        <taxon>Chordata</taxon>
        <taxon>Craniata</taxon>
        <taxon>Vertebrata</taxon>
        <taxon>Euteleostomi</taxon>
        <taxon>Mammalia</taxon>
        <taxon>Eutheria</taxon>
        <taxon>Euarchontoglires</taxon>
        <taxon>Glires</taxon>
        <taxon>Rodentia</taxon>
        <taxon>Myomorpha</taxon>
        <taxon>Muroidea</taxon>
        <taxon>Muridae</taxon>
        <taxon>Murinae</taxon>
        <taxon>Mus</taxon>
        <taxon>Mus</taxon>
    </lineage>
</organism>
<name>CCD70_MOUSE</name>